<feature type="signal peptide" evidence="3">
    <location>
        <begin position="1"/>
        <end position="19"/>
    </location>
</feature>
<feature type="propeptide" id="PRO_0000034827" evidence="4">
    <location>
        <begin position="20"/>
        <end position="33"/>
    </location>
</feature>
<feature type="chain" id="PRO_0000034828" description="Delta-stichotoxin-Sgt3a" evidence="4">
    <location>
        <begin position="36"/>
        <end position="83"/>
    </location>
</feature>
<feature type="propeptide" id="PRO_0000034829">
    <location>
        <position position="84"/>
    </location>
</feature>
<feature type="disulfide bond" evidence="2">
    <location>
        <begin position="38"/>
        <end position="78"/>
    </location>
</feature>
<feature type="disulfide bond" evidence="2">
    <location>
        <begin position="40"/>
        <end position="68"/>
    </location>
</feature>
<feature type="disulfide bond" evidence="2">
    <location>
        <begin position="61"/>
        <end position="79"/>
    </location>
</feature>
<keyword id="KW-0165">Cleavage on pair of basic residues</keyword>
<keyword id="KW-0903">Direct protein sequencing</keyword>
<keyword id="KW-1015">Disulfide bond</keyword>
<keyword id="KW-0872">Ion channel impairing toxin</keyword>
<keyword id="KW-0166">Nematocyst</keyword>
<keyword id="KW-0528">Neurotoxin</keyword>
<keyword id="KW-0964">Secreted</keyword>
<keyword id="KW-0732">Signal</keyword>
<keyword id="KW-0800">Toxin</keyword>
<keyword id="KW-0738">Voltage-gated sodium channel impairing toxin</keyword>
<proteinExistence type="evidence at protein level"/>
<sequence>MAYLKIVLVALMLVVAVSAMRLSDQEDQDISVAKRAACKCDDDGPDIRSATLTGTVDLGSCNEGWEKCASFYTILADCCRRPRG</sequence>
<name>NA2G3_STIGI</name>
<dbReference type="EMBL" id="AB110015">
    <property type="protein sequence ID" value="BAD01580.1"/>
    <property type="molecule type" value="mRNA"/>
</dbReference>
<dbReference type="SMR" id="Q76CA0"/>
<dbReference type="GO" id="GO:0005576">
    <property type="term" value="C:extracellular region"/>
    <property type="evidence" value="ECO:0007669"/>
    <property type="project" value="UniProtKB-SubCell"/>
</dbReference>
<dbReference type="GO" id="GO:0042151">
    <property type="term" value="C:nematocyst"/>
    <property type="evidence" value="ECO:0007669"/>
    <property type="project" value="UniProtKB-SubCell"/>
</dbReference>
<dbReference type="GO" id="GO:0017080">
    <property type="term" value="F:sodium channel regulator activity"/>
    <property type="evidence" value="ECO:0007669"/>
    <property type="project" value="UniProtKB-KW"/>
</dbReference>
<dbReference type="GO" id="GO:0090729">
    <property type="term" value="F:toxin activity"/>
    <property type="evidence" value="ECO:0007669"/>
    <property type="project" value="UniProtKB-KW"/>
</dbReference>
<dbReference type="Gene3D" id="2.20.20.10">
    <property type="entry name" value="Anthopleurin-A"/>
    <property type="match status" value="1"/>
</dbReference>
<dbReference type="InterPro" id="IPR023355">
    <property type="entry name" value="Myo_ane_neurotoxin_sf"/>
</dbReference>
<dbReference type="Pfam" id="PF00706">
    <property type="entry name" value="Toxin_4"/>
    <property type="match status" value="1"/>
</dbReference>
<dbReference type="SUPFAM" id="SSF57392">
    <property type="entry name" value="Defensin-like"/>
    <property type="match status" value="1"/>
</dbReference>
<accession>Q76CA0</accession>
<comment type="function">
    <text evidence="1">Binds specifically to voltage-gated sodium channels (Nav), thereby delaying their inactivation during signal transduction.</text>
</comment>
<comment type="subcellular location">
    <subcellularLocation>
        <location evidence="8">Secreted</location>
    </subcellularLocation>
    <subcellularLocation>
        <location evidence="7">Nematocyst</location>
    </subcellularLocation>
</comment>
<comment type="toxic dose">
    <text evidence="4">LD(50) is 120 ug/kg to crabs.</text>
</comment>
<comment type="similarity">
    <text evidence="7">Belongs to the sea anemone sodium channel inhibitory toxin family. Type II subfamily.</text>
</comment>
<evidence type="ECO:0000250" key="1"/>
<evidence type="ECO:0000250" key="2">
    <source>
        <dbReference type="UniProtKB" id="P19651"/>
    </source>
</evidence>
<evidence type="ECO:0000255" key="3"/>
<evidence type="ECO:0000269" key="4">
    <source>
    </source>
</evidence>
<evidence type="ECO:0000303" key="5">
    <source>
    </source>
</evidence>
<evidence type="ECO:0000303" key="6">
    <source>
    </source>
</evidence>
<evidence type="ECO:0000305" key="7"/>
<evidence type="ECO:0000305" key="8">
    <source>
    </source>
</evidence>
<organism>
    <name type="scientific">Stichodactyla gigantea</name>
    <name type="common">Giant carpet anemone</name>
    <name type="synonym">Priapus giganteus</name>
    <dbReference type="NCBI Taxonomy" id="230562"/>
    <lineage>
        <taxon>Eukaryota</taxon>
        <taxon>Metazoa</taxon>
        <taxon>Cnidaria</taxon>
        <taxon>Anthozoa</taxon>
        <taxon>Hexacorallia</taxon>
        <taxon>Actiniaria</taxon>
        <taxon>Stichodactylidae</taxon>
        <taxon>Stichodactyla</taxon>
    </lineage>
</organism>
<reference key="1">
    <citation type="journal article" date="2003" name="Biochim. Biophys. Acta">
        <title>Molecular cloning of an epidermal growth factor-like toxin and two sodium channel toxins from the sea anemone Stichodactyla gigantea.</title>
        <authorList>
            <person name="Honma T."/>
            <person name="Nagai H."/>
            <person name="Nagashima Y."/>
            <person name="Shiomi K."/>
        </authorList>
    </citation>
    <scope>NUCLEOTIDE SEQUENCE [MRNA]</scope>
</reference>
<reference key="2">
    <citation type="journal article" date="2003" name="Toxicon">
        <title>An epidermal growth factor-like toxin and two sodium channel toxins from the sea anemone Stichodactyla gigantea.</title>
        <authorList>
            <person name="Shiomi K."/>
            <person name="Honma T."/>
            <person name="Ide M."/>
            <person name="Nagashima Y."/>
            <person name="Ishida M."/>
            <person name="Chino M."/>
        </authorList>
    </citation>
    <scope>PROTEIN SEQUENCE OF 36-83</scope>
    <scope>TOXIC DOSE</scope>
    <source>
        <tissue>Nematoblast</tissue>
    </source>
</reference>
<reference key="3">
    <citation type="journal article" date="2012" name="Toxicon">
        <title>Development of a rational nomenclature for naming peptide and protein toxins from sea anemones.</title>
        <authorList>
            <person name="Oliveira J.S."/>
            <person name="Fuentes-Silva D."/>
            <person name="King G.F."/>
        </authorList>
    </citation>
    <scope>NOMENCLATURE</scope>
</reference>
<protein>
    <recommendedName>
        <fullName evidence="6">Delta-stichotoxin-Sgt3a</fullName>
        <shortName evidence="6">Delta-SHTX-Sgt3a</shortName>
    </recommendedName>
    <alternativeName>
        <fullName evidence="5">Gigantoxin III</fullName>
        <shortName>Gigt III</shortName>
    </alternativeName>
    <alternativeName>
        <fullName evidence="7">Gigantoxin-3</fullName>
    </alternativeName>
</protein>